<accession>Q81MB5</accession>
<accession>Q6HTR7</accession>
<accession>Q6KN05</accession>
<protein>
    <recommendedName>
        <fullName evidence="1">6,7-dimethyl-8-ribityllumazine synthase</fullName>
        <shortName evidence="1">DMRL synthase</shortName>
        <shortName evidence="1">LS</shortName>
        <shortName evidence="1">Lumazine synthase</shortName>
        <ecNumber evidence="1">2.5.1.78</ecNumber>
    </recommendedName>
</protein>
<evidence type="ECO:0000255" key="1">
    <source>
        <dbReference type="HAMAP-Rule" id="MF_00178"/>
    </source>
</evidence>
<evidence type="ECO:0000269" key="2">
    <source>
    </source>
</evidence>
<evidence type="ECO:0000305" key="3"/>
<evidence type="ECO:0007829" key="4">
    <source>
        <dbReference type="PDB" id="4V7G"/>
    </source>
</evidence>
<organism>
    <name type="scientific">Bacillus anthracis</name>
    <dbReference type="NCBI Taxonomy" id="1392"/>
    <lineage>
        <taxon>Bacteria</taxon>
        <taxon>Bacillati</taxon>
        <taxon>Bacillota</taxon>
        <taxon>Bacilli</taxon>
        <taxon>Bacillales</taxon>
        <taxon>Bacillaceae</taxon>
        <taxon>Bacillus</taxon>
        <taxon>Bacillus cereus group</taxon>
    </lineage>
</organism>
<dbReference type="EC" id="2.5.1.78" evidence="1"/>
<dbReference type="EMBL" id="AE016879">
    <property type="protein sequence ID" value="AAP28053.1"/>
    <property type="molecule type" value="Genomic_DNA"/>
</dbReference>
<dbReference type="EMBL" id="AE017334">
    <property type="protein sequence ID" value="AAT33455.1"/>
    <property type="molecule type" value="Genomic_DNA"/>
</dbReference>
<dbReference type="EMBL" id="AE017225">
    <property type="protein sequence ID" value="AAT56322.1"/>
    <property type="molecule type" value="Genomic_DNA"/>
</dbReference>
<dbReference type="RefSeq" id="NP_846567.1">
    <property type="nucleotide sequence ID" value="NC_003997.3"/>
</dbReference>
<dbReference type="RefSeq" id="WP_000230891.1">
    <property type="nucleotide sequence ID" value="NZ_WXXJ01000027.1"/>
</dbReference>
<dbReference type="RefSeq" id="YP_030271.1">
    <property type="nucleotide sequence ID" value="NC_005945.1"/>
</dbReference>
<dbReference type="PDB" id="4V7G">
    <property type="method" value="X-ray"/>
    <property type="resolution" value="3.50 A"/>
    <property type="chains" value="A1/A2/A3/A4/AA/AB/AC/AD/AE/AF/AG/AH/AI/AJ/AK/AL/AM/AN/AO/AP/AQ/AR/AS/AT/AU/AV/AW/AX/AY/AZ/B1/B2/B3/B4/BA/BB/BC/BD/BE/BF/BG/BH/BI/BJ/BK/BL/BM/BN/BO/BP/BQ/BR/BS/BT/BU/BV/BW/BX/BY/BZ/C1/C2/C3/C4/CA/CB/CC/CD/CE/CF/CG=1-153"/>
</dbReference>
<dbReference type="PDBsum" id="4V7G"/>
<dbReference type="SMR" id="Q81MB5"/>
<dbReference type="STRING" id="261594.GBAA_4334"/>
<dbReference type="DNASU" id="1087551"/>
<dbReference type="GeneID" id="45024001"/>
<dbReference type="KEGG" id="ban:BA_4334"/>
<dbReference type="KEGG" id="banh:HYU01_21170"/>
<dbReference type="KEGG" id="bar:GBAA_4334"/>
<dbReference type="KEGG" id="bat:BAS4021"/>
<dbReference type="PATRIC" id="fig|198094.11.peg.4303"/>
<dbReference type="eggNOG" id="COG0054">
    <property type="taxonomic scope" value="Bacteria"/>
</dbReference>
<dbReference type="HOGENOM" id="CLU_089358_1_1_9"/>
<dbReference type="OMA" id="CQGVTQG"/>
<dbReference type="OrthoDB" id="9809709at2"/>
<dbReference type="UniPathway" id="UPA00275">
    <property type="reaction ID" value="UER00404"/>
</dbReference>
<dbReference type="Proteomes" id="UP000000427">
    <property type="component" value="Chromosome"/>
</dbReference>
<dbReference type="Proteomes" id="UP000000594">
    <property type="component" value="Chromosome"/>
</dbReference>
<dbReference type="GO" id="GO:0005829">
    <property type="term" value="C:cytosol"/>
    <property type="evidence" value="ECO:0007669"/>
    <property type="project" value="TreeGrafter"/>
</dbReference>
<dbReference type="GO" id="GO:0009349">
    <property type="term" value="C:riboflavin synthase complex"/>
    <property type="evidence" value="ECO:0007669"/>
    <property type="project" value="InterPro"/>
</dbReference>
<dbReference type="GO" id="GO:0000906">
    <property type="term" value="F:6,7-dimethyl-8-ribityllumazine synthase activity"/>
    <property type="evidence" value="ECO:0007669"/>
    <property type="project" value="UniProtKB-UniRule"/>
</dbReference>
<dbReference type="GO" id="GO:0009231">
    <property type="term" value="P:riboflavin biosynthetic process"/>
    <property type="evidence" value="ECO:0007669"/>
    <property type="project" value="UniProtKB-UniRule"/>
</dbReference>
<dbReference type="CDD" id="cd09209">
    <property type="entry name" value="Lumazine_synthase-I"/>
    <property type="match status" value="1"/>
</dbReference>
<dbReference type="FunFam" id="3.40.50.960:FF:000001">
    <property type="entry name" value="6,7-dimethyl-8-ribityllumazine synthase"/>
    <property type="match status" value="1"/>
</dbReference>
<dbReference type="Gene3D" id="3.40.50.960">
    <property type="entry name" value="Lumazine/riboflavin synthase"/>
    <property type="match status" value="1"/>
</dbReference>
<dbReference type="HAMAP" id="MF_00178">
    <property type="entry name" value="Lumazine_synth"/>
    <property type="match status" value="1"/>
</dbReference>
<dbReference type="InterPro" id="IPR034964">
    <property type="entry name" value="LS"/>
</dbReference>
<dbReference type="InterPro" id="IPR002180">
    <property type="entry name" value="LS/RS"/>
</dbReference>
<dbReference type="InterPro" id="IPR036467">
    <property type="entry name" value="LS/RS_sf"/>
</dbReference>
<dbReference type="NCBIfam" id="TIGR00114">
    <property type="entry name" value="lumazine-synth"/>
    <property type="match status" value="1"/>
</dbReference>
<dbReference type="NCBIfam" id="NF000812">
    <property type="entry name" value="PRK00061.1-4"/>
    <property type="match status" value="1"/>
</dbReference>
<dbReference type="PANTHER" id="PTHR21058:SF0">
    <property type="entry name" value="6,7-DIMETHYL-8-RIBITYLLUMAZINE SYNTHASE"/>
    <property type="match status" value="1"/>
</dbReference>
<dbReference type="PANTHER" id="PTHR21058">
    <property type="entry name" value="6,7-DIMETHYL-8-RIBITYLLUMAZINE SYNTHASE DMRL SYNTHASE LUMAZINE SYNTHASE"/>
    <property type="match status" value="1"/>
</dbReference>
<dbReference type="Pfam" id="PF00885">
    <property type="entry name" value="DMRL_synthase"/>
    <property type="match status" value="1"/>
</dbReference>
<dbReference type="SUPFAM" id="SSF52121">
    <property type="entry name" value="Lumazine synthase"/>
    <property type="match status" value="1"/>
</dbReference>
<feature type="chain" id="PRO_0000134710" description="6,7-dimethyl-8-ribityllumazine synthase">
    <location>
        <begin position="1"/>
        <end position="153"/>
    </location>
</feature>
<feature type="active site" description="Proton donor" evidence="1">
    <location>
        <position position="87"/>
    </location>
</feature>
<feature type="binding site" evidence="1">
    <location>
        <position position="21"/>
    </location>
    <ligand>
        <name>5-amino-6-(D-ribitylamino)uracil</name>
        <dbReference type="ChEBI" id="CHEBI:15934"/>
    </ligand>
</feature>
<feature type="binding site" evidence="1">
    <location>
        <begin position="55"/>
        <end position="57"/>
    </location>
    <ligand>
        <name>5-amino-6-(D-ribitylamino)uracil</name>
        <dbReference type="ChEBI" id="CHEBI:15934"/>
    </ligand>
</feature>
<feature type="binding site" evidence="1">
    <location>
        <begin position="79"/>
        <end position="81"/>
    </location>
    <ligand>
        <name>5-amino-6-(D-ribitylamino)uracil</name>
        <dbReference type="ChEBI" id="CHEBI:15934"/>
    </ligand>
</feature>
<feature type="binding site" evidence="3">
    <location>
        <begin position="84"/>
        <end position="85"/>
    </location>
    <ligand>
        <name>(2S)-2-hydroxy-3-oxobutyl phosphate</name>
        <dbReference type="ChEBI" id="CHEBI:58830"/>
    </ligand>
</feature>
<feature type="binding site" evidence="1">
    <location>
        <position position="112"/>
    </location>
    <ligand>
        <name>5-amino-6-(D-ribitylamino)uracil</name>
        <dbReference type="ChEBI" id="CHEBI:15934"/>
    </ligand>
</feature>
<feature type="binding site" evidence="3">
    <location>
        <position position="126"/>
    </location>
    <ligand>
        <name>(2S)-2-hydroxy-3-oxobutyl phosphate</name>
        <dbReference type="ChEBI" id="CHEBI:58830"/>
    </ligand>
</feature>
<feature type="strand" evidence="4">
    <location>
        <begin position="14"/>
        <end position="20"/>
    </location>
</feature>
<feature type="helix" evidence="4">
    <location>
        <begin position="23"/>
        <end position="29"/>
    </location>
</feature>
<feature type="helix" evidence="4">
    <location>
        <begin position="30"/>
        <end position="32"/>
    </location>
</feature>
<feature type="helix" evidence="4">
    <location>
        <begin position="33"/>
        <end position="37"/>
    </location>
</feature>
<feature type="helix" evidence="4">
    <location>
        <begin position="38"/>
        <end position="40"/>
    </location>
</feature>
<feature type="helix" evidence="4">
    <location>
        <begin position="44"/>
        <end position="46"/>
    </location>
</feature>
<feature type="strand" evidence="4">
    <location>
        <begin position="47"/>
        <end position="54"/>
    </location>
</feature>
<feature type="helix" evidence="4">
    <location>
        <begin position="55"/>
        <end position="57"/>
    </location>
</feature>
<feature type="helix" evidence="4">
    <location>
        <begin position="58"/>
        <end position="66"/>
    </location>
</feature>
<feature type="turn" evidence="4">
    <location>
        <begin position="67"/>
        <end position="69"/>
    </location>
</feature>
<feature type="strand" evidence="4">
    <location>
        <begin position="72"/>
        <end position="81"/>
    </location>
</feature>
<feature type="helix" evidence="4">
    <location>
        <begin position="87"/>
        <end position="101"/>
    </location>
</feature>
<feature type="strand" evidence="4">
    <location>
        <begin position="103"/>
        <end position="106"/>
    </location>
</feature>
<feature type="strand" evidence="4">
    <location>
        <begin position="110"/>
        <end position="118"/>
    </location>
</feature>
<feature type="helix" evidence="4">
    <location>
        <begin position="120"/>
        <end position="125"/>
    </location>
</feature>
<feature type="strand" evidence="4">
    <location>
        <begin position="127"/>
        <end position="129"/>
    </location>
</feature>
<feature type="helix" evidence="4">
    <location>
        <begin position="134"/>
        <end position="146"/>
    </location>
</feature>
<feature type="turn" evidence="4">
    <location>
        <begin position="147"/>
        <end position="150"/>
    </location>
</feature>
<comment type="function">
    <text evidence="1 2">Catalyzes the formation of 6,7-dimethyl-8-ribityllumazine by condensation of 5-amino-6-(D-ribitylamino)uracil with 3,4-dihydroxy-2-butanone 4-phosphate. This is the penultimate step in the biosynthesis of riboflavin.</text>
</comment>
<comment type="catalytic activity">
    <reaction evidence="1 2">
        <text>(2S)-2-hydroxy-3-oxobutyl phosphate + 5-amino-6-(D-ribitylamino)uracil = 6,7-dimethyl-8-(1-D-ribityl)lumazine + phosphate + 2 H2O + H(+)</text>
        <dbReference type="Rhea" id="RHEA:26152"/>
        <dbReference type="ChEBI" id="CHEBI:15377"/>
        <dbReference type="ChEBI" id="CHEBI:15378"/>
        <dbReference type="ChEBI" id="CHEBI:15934"/>
        <dbReference type="ChEBI" id="CHEBI:43474"/>
        <dbReference type="ChEBI" id="CHEBI:58201"/>
        <dbReference type="ChEBI" id="CHEBI:58830"/>
        <dbReference type="EC" id="2.5.1.78"/>
    </reaction>
</comment>
<comment type="activity regulation">
    <text evidence="2">Activity is competitively inhibited by the bisubstrate-type compounds TS23, JC33 and JC72, with Ki values in the low nanomolar range.</text>
</comment>
<comment type="pathway">
    <text evidence="1">Cofactor biosynthesis; riboflavin biosynthesis; riboflavin from 2-hydroxy-3-oxobutyl phosphate and 5-amino-6-(D-ribitylamino)uracil: step 1/2.</text>
</comment>
<comment type="subunit">
    <text evidence="1 2">Forms an icosahedral capsid composed of 60 subunits, arranged as a dodecamer of pentamers.</text>
</comment>
<comment type="similarity">
    <text evidence="1">Belongs to the DMRL synthase family.</text>
</comment>
<proteinExistence type="evidence at protein level"/>
<keyword id="KW-0002">3D-structure</keyword>
<keyword id="KW-0903">Direct protein sequencing</keyword>
<keyword id="KW-1185">Reference proteome</keyword>
<keyword id="KW-0686">Riboflavin biosynthesis</keyword>
<keyword id="KW-0808">Transferase</keyword>
<sequence length="153" mass="16255">MVFEGHLVGTGLKVGVVVGRFNEFITSKLLGGALDGLKRHGVEENDIDVAWVPGAFEIPLIAKKMANSGKYDAVITLGTVIRGATTHYDYVCNEVAKGVASLSLQTDIPVIFGVLTTETIEQAIERAGTKAGNKGYESAVAAIEMAHLSKHWA</sequence>
<gene>
    <name evidence="1" type="primary">ribH</name>
    <name type="ordered locus">BA_4334</name>
    <name type="ordered locus">GBAA_4334</name>
    <name type="ordered locus">BAS4021</name>
</gene>
<reference key="1">
    <citation type="journal article" date="2003" name="Nature">
        <title>The genome sequence of Bacillus anthracis Ames and comparison to closely related bacteria.</title>
        <authorList>
            <person name="Read T.D."/>
            <person name="Peterson S.N."/>
            <person name="Tourasse N.J."/>
            <person name="Baillie L.W."/>
            <person name="Paulsen I.T."/>
            <person name="Nelson K.E."/>
            <person name="Tettelin H."/>
            <person name="Fouts D.E."/>
            <person name="Eisen J.A."/>
            <person name="Gill S.R."/>
            <person name="Holtzapple E.K."/>
            <person name="Okstad O.A."/>
            <person name="Helgason E."/>
            <person name="Rilstone J."/>
            <person name="Wu M."/>
            <person name="Kolonay J.F."/>
            <person name="Beanan M.J."/>
            <person name="Dodson R.J."/>
            <person name="Brinkac L.M."/>
            <person name="Gwinn M.L."/>
            <person name="DeBoy R.T."/>
            <person name="Madpu R."/>
            <person name="Daugherty S.C."/>
            <person name="Durkin A.S."/>
            <person name="Haft D.H."/>
            <person name="Nelson W.C."/>
            <person name="Peterson J.D."/>
            <person name="Pop M."/>
            <person name="Khouri H.M."/>
            <person name="Radune D."/>
            <person name="Benton J.L."/>
            <person name="Mahamoud Y."/>
            <person name="Jiang L."/>
            <person name="Hance I.R."/>
            <person name="Weidman J.F."/>
            <person name="Berry K.J."/>
            <person name="Plaut R.D."/>
            <person name="Wolf A.M."/>
            <person name="Watkins K.L."/>
            <person name="Nierman W.C."/>
            <person name="Hazen A."/>
            <person name="Cline R.T."/>
            <person name="Redmond C."/>
            <person name="Thwaite J.E."/>
            <person name="White O."/>
            <person name="Salzberg S.L."/>
            <person name="Thomason B."/>
            <person name="Friedlander A.M."/>
            <person name="Koehler T.M."/>
            <person name="Hanna P.C."/>
            <person name="Kolstoe A.-B."/>
            <person name="Fraser C.M."/>
        </authorList>
    </citation>
    <scope>NUCLEOTIDE SEQUENCE [LARGE SCALE GENOMIC DNA]</scope>
    <source>
        <strain>Ames / isolate Porton</strain>
    </source>
</reference>
<reference key="2">
    <citation type="journal article" date="2009" name="J. Bacteriol.">
        <title>The complete genome sequence of Bacillus anthracis Ames 'Ancestor'.</title>
        <authorList>
            <person name="Ravel J."/>
            <person name="Jiang L."/>
            <person name="Stanley S.T."/>
            <person name="Wilson M.R."/>
            <person name="Decker R.S."/>
            <person name="Read T.D."/>
            <person name="Worsham P."/>
            <person name="Keim P.S."/>
            <person name="Salzberg S.L."/>
            <person name="Fraser-Liggett C.M."/>
            <person name="Rasko D.A."/>
        </authorList>
    </citation>
    <scope>NUCLEOTIDE SEQUENCE [LARGE SCALE GENOMIC DNA]</scope>
    <source>
        <strain>Ames ancestor</strain>
    </source>
</reference>
<reference key="3">
    <citation type="submission" date="2004-01" db="EMBL/GenBank/DDBJ databases">
        <title>Complete genome sequence of Bacillus anthracis Sterne.</title>
        <authorList>
            <person name="Brettin T.S."/>
            <person name="Bruce D."/>
            <person name="Challacombe J.F."/>
            <person name="Gilna P."/>
            <person name="Han C."/>
            <person name="Hill K."/>
            <person name="Hitchcock P."/>
            <person name="Jackson P."/>
            <person name="Keim P."/>
            <person name="Longmire J."/>
            <person name="Lucas S."/>
            <person name="Okinaka R."/>
            <person name="Richardson P."/>
            <person name="Rubin E."/>
            <person name="Tice H."/>
        </authorList>
    </citation>
    <scope>NUCLEOTIDE SEQUENCE [LARGE SCALE GENOMIC DNA]</scope>
    <source>
        <strain>Sterne</strain>
    </source>
</reference>
<reference key="4">
    <citation type="journal article" date="2010" name="Acta Crystallogr. D">
        <title>Structural study and thermodynamic characterization of inhibitor binding to lumazine synthase from Bacillus anthracis.</title>
        <authorList>
            <person name="Morgunova E."/>
            <person name="Illarionov B."/>
            <person name="Saller S."/>
            <person name="Popov A."/>
            <person name="Sambaiah T."/>
            <person name="Bacher A."/>
            <person name="Cushman M."/>
            <person name="Fischer M."/>
            <person name="Ladenstein R."/>
        </authorList>
    </citation>
    <scope>PROTEIN SEQUENCE OF 1-10</scope>
    <scope>X-RAY CRYSTALLOGRAPHY (3.50 ANGSTROMS) IN COMPLEXES WITH PHOSPHATE</scope>
    <scope>FUNCTION</scope>
    <scope>CATALYTIC ACTIVITY</scope>
    <scope>SUBUNIT</scope>
    <scope>ACTIVITY REGULATION</scope>
</reference>
<name>RISB_BACAN</name>